<proteinExistence type="inferred from homology"/>
<name>ADH1_NEUCR</name>
<sequence length="353" mass="37443">MPQFEIPEQQWAQVVEKKGGPVVFKQIPVQKPGPDEVLINVKYSGVCHTDLHAMKGDWPLATKMPLVGGHEGAGVVVAKGELVTEVEVGDHAGIKWLNGSCLACSFCMQADEPLCPHALLSGYTVDGSFQQYAIAKAAHVAKIPKGCDLETTAPVLCAGITVYKGLKESGVRPGQCVAIVGAGGGLGSMAIQYANAMGLHAIAIDGGEEKGKNCRELGAQAYVDFTTTKDLVADVKAATPDGLGPHAVILLAVSEKPFHQAVDYVRSRGTIICIGLPAGAKFQAPVFDTVIRMITIKGSYVGNRQDTQEALDFFARGLIKVPIKTVGLSKLQEVYDLMEEGKIVGRYVVDTSK</sequence>
<reference key="1">
    <citation type="journal article" date="2003" name="Nucleic Acids Res.">
        <title>What's in the genome of a filamentous fungus? Analysis of the Neurospora genome sequence.</title>
        <authorList>
            <person name="Mannhaupt G."/>
            <person name="Montrone C."/>
            <person name="Haase D."/>
            <person name="Mewes H.-W."/>
            <person name="Aign V."/>
            <person name="Hoheisel J.D."/>
            <person name="Fartmann B."/>
            <person name="Nyakatura G."/>
            <person name="Kempken F."/>
            <person name="Maier J."/>
            <person name="Schulte U."/>
        </authorList>
    </citation>
    <scope>NUCLEOTIDE SEQUENCE [LARGE SCALE GENOMIC DNA]</scope>
    <source>
        <strain>ATCC 24698 / 74-OR23-1A / CBS 708.71 / DSM 1257 / FGSC 987</strain>
    </source>
</reference>
<reference key="2">
    <citation type="journal article" date="2003" name="Nature">
        <title>The genome sequence of the filamentous fungus Neurospora crassa.</title>
        <authorList>
            <person name="Galagan J.E."/>
            <person name="Calvo S.E."/>
            <person name="Borkovich K.A."/>
            <person name="Selker E.U."/>
            <person name="Read N.D."/>
            <person name="Jaffe D.B."/>
            <person name="FitzHugh W."/>
            <person name="Ma L.-J."/>
            <person name="Smirnov S."/>
            <person name="Purcell S."/>
            <person name="Rehman B."/>
            <person name="Elkins T."/>
            <person name="Engels R."/>
            <person name="Wang S."/>
            <person name="Nielsen C.B."/>
            <person name="Butler J."/>
            <person name="Endrizzi M."/>
            <person name="Qui D."/>
            <person name="Ianakiev P."/>
            <person name="Bell-Pedersen D."/>
            <person name="Nelson M.A."/>
            <person name="Werner-Washburne M."/>
            <person name="Selitrennikoff C.P."/>
            <person name="Kinsey J.A."/>
            <person name="Braun E.L."/>
            <person name="Zelter A."/>
            <person name="Schulte U."/>
            <person name="Kothe G.O."/>
            <person name="Jedd G."/>
            <person name="Mewes H.-W."/>
            <person name="Staben C."/>
            <person name="Marcotte E."/>
            <person name="Greenberg D."/>
            <person name="Roy A."/>
            <person name="Foley K."/>
            <person name="Naylor J."/>
            <person name="Stange-Thomann N."/>
            <person name="Barrett R."/>
            <person name="Gnerre S."/>
            <person name="Kamal M."/>
            <person name="Kamvysselis M."/>
            <person name="Mauceli E.W."/>
            <person name="Bielke C."/>
            <person name="Rudd S."/>
            <person name="Frishman D."/>
            <person name="Krystofova S."/>
            <person name="Rasmussen C."/>
            <person name="Metzenberg R.L."/>
            <person name="Perkins D.D."/>
            <person name="Kroken S."/>
            <person name="Cogoni C."/>
            <person name="Macino G."/>
            <person name="Catcheside D.E.A."/>
            <person name="Li W."/>
            <person name="Pratt R.J."/>
            <person name="Osmani S.A."/>
            <person name="DeSouza C.P.C."/>
            <person name="Glass N.L."/>
            <person name="Orbach M.J."/>
            <person name="Berglund J.A."/>
            <person name="Voelker R."/>
            <person name="Yarden O."/>
            <person name="Plamann M."/>
            <person name="Seiler S."/>
            <person name="Dunlap J.C."/>
            <person name="Radford A."/>
            <person name="Aramayo R."/>
            <person name="Natvig D.O."/>
            <person name="Alex L.A."/>
            <person name="Mannhaupt G."/>
            <person name="Ebbole D.J."/>
            <person name="Freitag M."/>
            <person name="Paulsen I."/>
            <person name="Sachs M.S."/>
            <person name="Lander E.S."/>
            <person name="Nusbaum C."/>
            <person name="Birren B.W."/>
        </authorList>
    </citation>
    <scope>NUCLEOTIDE SEQUENCE [LARGE SCALE GENOMIC DNA]</scope>
    <source>
        <strain>ATCC 24698 / 74-OR23-1A / CBS 708.71 / DSM 1257 / FGSC 987</strain>
    </source>
</reference>
<dbReference type="EC" id="1.1.1.1"/>
<dbReference type="EMBL" id="AL355926">
    <property type="protein sequence ID" value="CAB91241.1"/>
    <property type="molecule type" value="Genomic_DNA"/>
</dbReference>
<dbReference type="EMBL" id="CM002237">
    <property type="protein sequence ID" value="ESA43622.1"/>
    <property type="molecule type" value="Genomic_DNA"/>
</dbReference>
<dbReference type="PIR" id="T49440">
    <property type="entry name" value="T49440"/>
</dbReference>
<dbReference type="RefSeq" id="XP_011393501.1">
    <property type="nucleotide sequence ID" value="XM_011395199.1"/>
</dbReference>
<dbReference type="SMR" id="Q9P6C8"/>
<dbReference type="FunCoup" id="Q9P6C8">
    <property type="interactions" value="808"/>
</dbReference>
<dbReference type="STRING" id="367110.Q9P6C8"/>
<dbReference type="PaxDb" id="5141-EFNCRP00000001711"/>
<dbReference type="EnsemblFungi" id="ESA43622">
    <property type="protein sequence ID" value="ESA43622"/>
    <property type="gene ID" value="NCU01754"/>
</dbReference>
<dbReference type="GeneID" id="3873329"/>
<dbReference type="KEGG" id="ncr:NCU01754"/>
<dbReference type="VEuPathDB" id="FungiDB:NCU01754"/>
<dbReference type="HOGENOM" id="CLU_026673_20_1_1"/>
<dbReference type="InParanoid" id="Q9P6C8"/>
<dbReference type="OrthoDB" id="1879366at2759"/>
<dbReference type="BRENDA" id="1.1.1.1">
    <property type="organism ID" value="3627"/>
</dbReference>
<dbReference type="Proteomes" id="UP000001805">
    <property type="component" value="Chromosome 6, Linkage Group II"/>
</dbReference>
<dbReference type="GO" id="GO:0005737">
    <property type="term" value="C:cytoplasm"/>
    <property type="evidence" value="ECO:0000318"/>
    <property type="project" value="GO_Central"/>
</dbReference>
<dbReference type="GO" id="GO:0004022">
    <property type="term" value="F:alcohol dehydrogenase (NAD+) activity"/>
    <property type="evidence" value="ECO:0000318"/>
    <property type="project" value="GO_Central"/>
</dbReference>
<dbReference type="GO" id="GO:0008270">
    <property type="term" value="F:zinc ion binding"/>
    <property type="evidence" value="ECO:0007669"/>
    <property type="project" value="InterPro"/>
</dbReference>
<dbReference type="CDD" id="cd08297">
    <property type="entry name" value="CAD3"/>
    <property type="match status" value="1"/>
</dbReference>
<dbReference type="FunFam" id="3.40.50.720:FF:000039">
    <property type="entry name" value="Alcohol dehydrogenase AdhP"/>
    <property type="match status" value="1"/>
</dbReference>
<dbReference type="FunFam" id="3.90.180.10:FF:000002">
    <property type="entry name" value="Alcohol dehydrogenase AdhP"/>
    <property type="match status" value="1"/>
</dbReference>
<dbReference type="Gene3D" id="3.90.180.10">
    <property type="entry name" value="Medium-chain alcohol dehydrogenases, catalytic domain"/>
    <property type="match status" value="1"/>
</dbReference>
<dbReference type="Gene3D" id="3.40.50.720">
    <property type="entry name" value="NAD(P)-binding Rossmann-like Domain"/>
    <property type="match status" value="1"/>
</dbReference>
<dbReference type="InterPro" id="IPR013149">
    <property type="entry name" value="ADH-like_C"/>
</dbReference>
<dbReference type="InterPro" id="IPR013154">
    <property type="entry name" value="ADH-like_N"/>
</dbReference>
<dbReference type="InterPro" id="IPR002328">
    <property type="entry name" value="ADH_Zn_CS"/>
</dbReference>
<dbReference type="InterPro" id="IPR011032">
    <property type="entry name" value="GroES-like_sf"/>
</dbReference>
<dbReference type="InterPro" id="IPR036291">
    <property type="entry name" value="NAD(P)-bd_dom_sf"/>
</dbReference>
<dbReference type="InterPro" id="IPR020843">
    <property type="entry name" value="PKS_ER"/>
</dbReference>
<dbReference type="PANTHER" id="PTHR42940">
    <property type="entry name" value="ALCOHOL DEHYDROGENASE 1-RELATED"/>
    <property type="match status" value="1"/>
</dbReference>
<dbReference type="PANTHER" id="PTHR42940:SF3">
    <property type="entry name" value="ALCOHOL DEHYDROGENASE 1-RELATED"/>
    <property type="match status" value="1"/>
</dbReference>
<dbReference type="Pfam" id="PF08240">
    <property type="entry name" value="ADH_N"/>
    <property type="match status" value="1"/>
</dbReference>
<dbReference type="Pfam" id="PF00107">
    <property type="entry name" value="ADH_zinc_N"/>
    <property type="match status" value="1"/>
</dbReference>
<dbReference type="SMART" id="SM00829">
    <property type="entry name" value="PKS_ER"/>
    <property type="match status" value="1"/>
</dbReference>
<dbReference type="SUPFAM" id="SSF50129">
    <property type="entry name" value="GroES-like"/>
    <property type="match status" value="1"/>
</dbReference>
<dbReference type="SUPFAM" id="SSF51735">
    <property type="entry name" value="NAD(P)-binding Rossmann-fold domains"/>
    <property type="match status" value="1"/>
</dbReference>
<dbReference type="PROSITE" id="PS00059">
    <property type="entry name" value="ADH_ZINC"/>
    <property type="match status" value="1"/>
</dbReference>
<gene>
    <name type="primary">adh-1</name>
    <name type="ORF">B17C10.210</name>
    <name type="ORF">NCU01754</name>
</gene>
<keyword id="KW-0963">Cytoplasm</keyword>
<keyword id="KW-0479">Metal-binding</keyword>
<keyword id="KW-0520">NAD</keyword>
<keyword id="KW-0560">Oxidoreductase</keyword>
<keyword id="KW-1185">Reference proteome</keyword>
<keyword id="KW-0862">Zinc</keyword>
<protein>
    <recommendedName>
        <fullName>Alcohol dehydrogenase 1</fullName>
        <ecNumber>1.1.1.1</ecNumber>
    </recommendedName>
    <alternativeName>
        <fullName>Alcohol dehydrogenase I</fullName>
    </alternativeName>
</protein>
<evidence type="ECO:0000250" key="1"/>
<evidence type="ECO:0000305" key="2"/>
<organism>
    <name type="scientific">Neurospora crassa (strain ATCC 24698 / 74-OR23-1A / CBS 708.71 / DSM 1257 / FGSC 987)</name>
    <dbReference type="NCBI Taxonomy" id="367110"/>
    <lineage>
        <taxon>Eukaryota</taxon>
        <taxon>Fungi</taxon>
        <taxon>Dikarya</taxon>
        <taxon>Ascomycota</taxon>
        <taxon>Pezizomycotina</taxon>
        <taxon>Sordariomycetes</taxon>
        <taxon>Sordariomycetidae</taxon>
        <taxon>Sordariales</taxon>
        <taxon>Sordariaceae</taxon>
        <taxon>Neurospora</taxon>
    </lineage>
</organism>
<feature type="chain" id="PRO_0000160726" description="Alcohol dehydrogenase 1">
    <location>
        <begin position="1"/>
        <end position="353"/>
    </location>
</feature>
<feature type="binding site" evidence="1">
    <location>
        <position position="47"/>
    </location>
    <ligand>
        <name>Zn(2+)</name>
        <dbReference type="ChEBI" id="CHEBI:29105"/>
        <label>1</label>
        <note>catalytic</note>
    </ligand>
</feature>
<feature type="binding site" evidence="1">
    <location>
        <position position="70"/>
    </location>
    <ligand>
        <name>Zn(2+)</name>
        <dbReference type="ChEBI" id="CHEBI:29105"/>
        <label>1</label>
        <note>catalytic</note>
    </ligand>
</feature>
<feature type="binding site" evidence="1">
    <location>
        <position position="101"/>
    </location>
    <ligand>
        <name>Zn(2+)</name>
        <dbReference type="ChEBI" id="CHEBI:29105"/>
        <label>2</label>
    </ligand>
</feature>
<feature type="binding site" evidence="1">
    <location>
        <position position="104"/>
    </location>
    <ligand>
        <name>Zn(2+)</name>
        <dbReference type="ChEBI" id="CHEBI:29105"/>
        <label>2</label>
    </ligand>
</feature>
<feature type="binding site" evidence="1">
    <location>
        <position position="107"/>
    </location>
    <ligand>
        <name>Zn(2+)</name>
        <dbReference type="ChEBI" id="CHEBI:29105"/>
        <label>2</label>
    </ligand>
</feature>
<feature type="binding site" evidence="1">
    <location>
        <position position="115"/>
    </location>
    <ligand>
        <name>Zn(2+)</name>
        <dbReference type="ChEBI" id="CHEBI:29105"/>
        <label>2</label>
    </ligand>
</feature>
<feature type="binding site" evidence="1">
    <location>
        <position position="157"/>
    </location>
    <ligand>
        <name>Zn(2+)</name>
        <dbReference type="ChEBI" id="CHEBI:29105"/>
        <label>1</label>
        <note>catalytic</note>
    </ligand>
</feature>
<feature type="binding site" evidence="1">
    <location>
        <begin position="181"/>
        <end position="187"/>
    </location>
    <ligand>
        <name>NAD(+)</name>
        <dbReference type="ChEBI" id="CHEBI:57540"/>
    </ligand>
</feature>
<feature type="binding site" evidence="1">
    <location>
        <position position="205"/>
    </location>
    <ligand>
        <name>NAD(+)</name>
        <dbReference type="ChEBI" id="CHEBI:57540"/>
    </ligand>
</feature>
<feature type="binding site" evidence="1">
    <location>
        <position position="210"/>
    </location>
    <ligand>
        <name>NAD(+)</name>
        <dbReference type="ChEBI" id="CHEBI:57540"/>
    </ligand>
</feature>
<feature type="binding site" evidence="1">
    <location>
        <begin position="274"/>
        <end position="276"/>
    </location>
    <ligand>
        <name>NAD(+)</name>
        <dbReference type="ChEBI" id="CHEBI:57540"/>
    </ligand>
</feature>
<feature type="binding site" evidence="1">
    <location>
        <position position="346"/>
    </location>
    <ligand>
        <name>NAD(+)</name>
        <dbReference type="ChEBI" id="CHEBI:57540"/>
    </ligand>
</feature>
<accession>Q9P6C8</accession>
<accession>Q7RV68</accession>
<accession>V5INI9</accession>
<comment type="catalytic activity">
    <reaction>
        <text>a primary alcohol + NAD(+) = an aldehyde + NADH + H(+)</text>
        <dbReference type="Rhea" id="RHEA:10736"/>
        <dbReference type="ChEBI" id="CHEBI:15378"/>
        <dbReference type="ChEBI" id="CHEBI:15734"/>
        <dbReference type="ChEBI" id="CHEBI:17478"/>
        <dbReference type="ChEBI" id="CHEBI:57540"/>
        <dbReference type="ChEBI" id="CHEBI:57945"/>
        <dbReference type="EC" id="1.1.1.1"/>
    </reaction>
</comment>
<comment type="catalytic activity">
    <reaction>
        <text>a secondary alcohol + NAD(+) = a ketone + NADH + H(+)</text>
        <dbReference type="Rhea" id="RHEA:10740"/>
        <dbReference type="ChEBI" id="CHEBI:15378"/>
        <dbReference type="ChEBI" id="CHEBI:17087"/>
        <dbReference type="ChEBI" id="CHEBI:35681"/>
        <dbReference type="ChEBI" id="CHEBI:57540"/>
        <dbReference type="ChEBI" id="CHEBI:57945"/>
        <dbReference type="EC" id="1.1.1.1"/>
    </reaction>
</comment>
<comment type="cofactor">
    <cofactor evidence="1">
        <name>Zn(2+)</name>
        <dbReference type="ChEBI" id="CHEBI:29105"/>
    </cofactor>
    <text evidence="1">Binds 2 Zn(2+) ions per subunit.</text>
</comment>
<comment type="subunit">
    <text evidence="1">Homotetramer.</text>
</comment>
<comment type="subcellular location">
    <subcellularLocation>
        <location>Cytoplasm</location>
    </subcellularLocation>
</comment>
<comment type="similarity">
    <text evidence="2">Belongs to the zinc-containing alcohol dehydrogenase family.</text>
</comment>